<sequence>MKTRKSHPIKRFFEQETAGGILLIVAAALAMLLANSPFYGHYDLLIDTPFIISLGDFALEKPLLLWTNDGLMAVFFLLVGLELKRELLEGELSDPRKIALPAVGAIGGMLVPALIYWWINKDNPLALSGWAIPAATDIAFALGVLALLGSRVPVTVKIFLTSIAVFDDIGAILIIAFFYTSKISMLALVVAAICCAILFICNRSGVTTLRAYLLIGLVMWVALLKSGVHATLGGVILAFFIPMTAARPHPEIKIPSPLKFLEHELHAPVAFLILPIFAFANSGIRFIGMGVEDFTHSVPVGIASGLFFGKQLGVFLFCGVCVLFGWLKLPKGMRWVHLYGVAVLCGIGFTMSLFIGSLAFQESGINSVIDERLGIVFGSLVSAVLGFVVLRSAKQKA</sequence>
<keyword id="KW-0050">Antiport</keyword>
<keyword id="KW-0997">Cell inner membrane</keyword>
<keyword id="KW-1003">Cell membrane</keyword>
<keyword id="KW-0406">Ion transport</keyword>
<keyword id="KW-0472">Membrane</keyword>
<keyword id="KW-1185">Reference proteome</keyword>
<keyword id="KW-0915">Sodium</keyword>
<keyword id="KW-0739">Sodium transport</keyword>
<keyword id="KW-0812">Transmembrane</keyword>
<keyword id="KW-1133">Transmembrane helix</keyword>
<keyword id="KW-0813">Transport</keyword>
<name>NHAA3_SACD2</name>
<comment type="function">
    <text evidence="1">Na(+)/H(+) antiporter that extrudes sodium in exchange for external protons.</text>
</comment>
<comment type="catalytic activity">
    <reaction evidence="1">
        <text>Na(+)(in) + 2 H(+)(out) = Na(+)(out) + 2 H(+)(in)</text>
        <dbReference type="Rhea" id="RHEA:29251"/>
        <dbReference type="ChEBI" id="CHEBI:15378"/>
        <dbReference type="ChEBI" id="CHEBI:29101"/>
    </reaction>
    <physiologicalReaction direction="left-to-right" evidence="1">
        <dbReference type="Rhea" id="RHEA:29252"/>
    </physiologicalReaction>
</comment>
<comment type="subcellular location">
    <subcellularLocation>
        <location evidence="1">Cell inner membrane</location>
        <topology evidence="1">Multi-pass membrane protein</topology>
    </subcellularLocation>
</comment>
<comment type="similarity">
    <text evidence="1">Belongs to the NhaA Na(+)/H(+) (TC 2.A.33) antiporter family.</text>
</comment>
<accession>Q21EC5</accession>
<feature type="chain" id="PRO_0000334405" description="Na(+)/H(+) antiporter NhaA 3">
    <location>
        <begin position="1"/>
        <end position="397"/>
    </location>
</feature>
<feature type="transmembrane region" description="Helical" evidence="1">
    <location>
        <begin position="18"/>
        <end position="38"/>
    </location>
</feature>
<feature type="transmembrane region" description="Helical" evidence="1">
    <location>
        <begin position="63"/>
        <end position="83"/>
    </location>
</feature>
<feature type="transmembrane region" description="Helical" evidence="1">
    <location>
        <begin position="98"/>
        <end position="118"/>
    </location>
</feature>
<feature type="transmembrane region" description="Helical" evidence="1">
    <location>
        <begin position="129"/>
        <end position="149"/>
    </location>
</feature>
<feature type="transmembrane region" description="Helical" evidence="1">
    <location>
        <begin position="158"/>
        <end position="178"/>
    </location>
</feature>
<feature type="transmembrane region" description="Helical" evidence="1">
    <location>
        <begin position="181"/>
        <end position="201"/>
    </location>
</feature>
<feature type="transmembrane region" description="Helical" evidence="1">
    <location>
        <begin position="207"/>
        <end position="224"/>
    </location>
</feature>
<feature type="transmembrane region" description="Helical" evidence="1">
    <location>
        <begin position="269"/>
        <end position="289"/>
    </location>
</feature>
<feature type="transmembrane region" description="Helical" evidence="1">
    <location>
        <begin position="306"/>
        <end position="326"/>
    </location>
</feature>
<feature type="transmembrane region" description="Helical" evidence="1">
    <location>
        <begin position="340"/>
        <end position="360"/>
    </location>
</feature>
<feature type="transmembrane region" description="Helical" evidence="1">
    <location>
        <begin position="373"/>
        <end position="393"/>
    </location>
</feature>
<protein>
    <recommendedName>
        <fullName evidence="1">Na(+)/H(+) antiporter NhaA 3</fullName>
    </recommendedName>
    <alternativeName>
        <fullName evidence="1">Sodium/proton antiporter NhaA 3</fullName>
    </alternativeName>
</protein>
<evidence type="ECO:0000255" key="1">
    <source>
        <dbReference type="HAMAP-Rule" id="MF_01844"/>
    </source>
</evidence>
<gene>
    <name evidence="1" type="primary">nhaA3</name>
    <name type="ordered locus">Sde_3699</name>
</gene>
<reference key="1">
    <citation type="journal article" date="2008" name="PLoS Genet.">
        <title>Complete genome sequence of the complex carbohydrate-degrading marine bacterium, Saccharophagus degradans strain 2-40 T.</title>
        <authorList>
            <person name="Weiner R.M."/>
            <person name="Taylor L.E. II"/>
            <person name="Henrissat B."/>
            <person name="Hauser L."/>
            <person name="Land M."/>
            <person name="Coutinho P.M."/>
            <person name="Rancurel C."/>
            <person name="Saunders E.H."/>
            <person name="Longmire A.G."/>
            <person name="Zhang H."/>
            <person name="Bayer E.A."/>
            <person name="Gilbert H.J."/>
            <person name="Larimer F."/>
            <person name="Zhulin I.B."/>
            <person name="Ekborg N.A."/>
            <person name="Lamed R."/>
            <person name="Richardson P.M."/>
            <person name="Borovok I."/>
            <person name="Hutcheson S."/>
        </authorList>
    </citation>
    <scope>NUCLEOTIDE SEQUENCE [LARGE SCALE GENOMIC DNA]</scope>
    <source>
        <strain>2-40 / ATCC 43961 / DSM 17024</strain>
    </source>
</reference>
<dbReference type="EMBL" id="CP000282">
    <property type="protein sequence ID" value="ABD82954.1"/>
    <property type="molecule type" value="Genomic_DNA"/>
</dbReference>
<dbReference type="RefSeq" id="WP_011470169.1">
    <property type="nucleotide sequence ID" value="NC_007912.1"/>
</dbReference>
<dbReference type="SMR" id="Q21EC5"/>
<dbReference type="STRING" id="203122.Sde_3699"/>
<dbReference type="GeneID" id="98615309"/>
<dbReference type="KEGG" id="sde:Sde_3699"/>
<dbReference type="eggNOG" id="COG3004">
    <property type="taxonomic scope" value="Bacteria"/>
</dbReference>
<dbReference type="HOGENOM" id="CLU_015803_1_0_6"/>
<dbReference type="Proteomes" id="UP000001947">
    <property type="component" value="Chromosome"/>
</dbReference>
<dbReference type="GO" id="GO:0005886">
    <property type="term" value="C:plasma membrane"/>
    <property type="evidence" value="ECO:0007669"/>
    <property type="project" value="UniProtKB-SubCell"/>
</dbReference>
<dbReference type="GO" id="GO:0015385">
    <property type="term" value="F:sodium:proton antiporter activity"/>
    <property type="evidence" value="ECO:0007669"/>
    <property type="project" value="TreeGrafter"/>
</dbReference>
<dbReference type="GO" id="GO:0006885">
    <property type="term" value="P:regulation of pH"/>
    <property type="evidence" value="ECO:0007669"/>
    <property type="project" value="InterPro"/>
</dbReference>
<dbReference type="Gene3D" id="1.20.1530.10">
    <property type="entry name" value="Na+/H+ antiporter like domain"/>
    <property type="match status" value="1"/>
</dbReference>
<dbReference type="HAMAP" id="MF_01844">
    <property type="entry name" value="NhaA"/>
    <property type="match status" value="1"/>
</dbReference>
<dbReference type="InterPro" id="IPR023171">
    <property type="entry name" value="Na/H_antiporter_dom_sf"/>
</dbReference>
<dbReference type="InterPro" id="IPR004670">
    <property type="entry name" value="NhaA"/>
</dbReference>
<dbReference type="NCBIfam" id="TIGR00773">
    <property type="entry name" value="NhaA"/>
    <property type="match status" value="1"/>
</dbReference>
<dbReference type="NCBIfam" id="NF007111">
    <property type="entry name" value="PRK09560.1"/>
    <property type="match status" value="1"/>
</dbReference>
<dbReference type="NCBIfam" id="NF007112">
    <property type="entry name" value="PRK09561.1"/>
    <property type="match status" value="1"/>
</dbReference>
<dbReference type="PANTHER" id="PTHR30341:SF0">
    <property type="entry name" value="NA(+)_H(+) ANTIPORTER NHAA"/>
    <property type="match status" value="1"/>
</dbReference>
<dbReference type="PANTHER" id="PTHR30341">
    <property type="entry name" value="SODIUM ION/PROTON ANTIPORTER NHAA-RELATED"/>
    <property type="match status" value="1"/>
</dbReference>
<dbReference type="Pfam" id="PF06965">
    <property type="entry name" value="Na_H_antiport_1"/>
    <property type="match status" value="1"/>
</dbReference>
<proteinExistence type="inferred from homology"/>
<organism>
    <name type="scientific">Saccharophagus degradans (strain 2-40 / ATCC 43961 / DSM 17024)</name>
    <dbReference type="NCBI Taxonomy" id="203122"/>
    <lineage>
        <taxon>Bacteria</taxon>
        <taxon>Pseudomonadati</taxon>
        <taxon>Pseudomonadota</taxon>
        <taxon>Gammaproteobacteria</taxon>
        <taxon>Cellvibrionales</taxon>
        <taxon>Cellvibrionaceae</taxon>
        <taxon>Saccharophagus</taxon>
    </lineage>
</organism>